<comment type="function">
    <text evidence="1">May play a role in DNA repair. It seems to be involved in an RecBC-independent recombinational process of DNA repair. It may act with RecF and RecO.</text>
</comment>
<comment type="similarity">
    <text evidence="1">Belongs to the RecR family.</text>
</comment>
<keyword id="KW-0227">DNA damage</keyword>
<keyword id="KW-0233">DNA recombination</keyword>
<keyword id="KW-0234">DNA repair</keyword>
<keyword id="KW-0479">Metal-binding</keyword>
<keyword id="KW-1185">Reference proteome</keyword>
<keyword id="KW-0862">Zinc</keyword>
<keyword id="KW-0863">Zinc-finger</keyword>
<gene>
    <name evidence="1" type="primary">recR</name>
    <name type="ordered locus">LSL_1226</name>
</gene>
<sequence>MQYPEPISKLIDSYMKLPGIGSKTATRLAFYTIDMQEDDVTEFAQSLISAKRDLSYCSICGNITESDPCMICADKSRDNSKVVVVEQPKDVMSLERMNEYHGLYHVLHGVLSPIEGKGPEDINIASLLRRLQKNEAIKEVIIATNATPEGEATAMYIARLVKPANIKVTRLAHGLAVGSDIEYADEMTLFKAIEGRQEI</sequence>
<accession>Q1WSU5</accession>
<feature type="chain" id="PRO_1000001561" description="Recombination protein RecR">
    <location>
        <begin position="1"/>
        <end position="199"/>
    </location>
</feature>
<feature type="domain" description="Toprim" evidence="1">
    <location>
        <begin position="80"/>
        <end position="176"/>
    </location>
</feature>
<feature type="zinc finger region" description="C4-type" evidence="1">
    <location>
        <begin position="57"/>
        <end position="72"/>
    </location>
</feature>
<organism>
    <name type="scientific">Ligilactobacillus salivarius (strain UCC118)</name>
    <name type="common">Lactobacillus salivarius</name>
    <dbReference type="NCBI Taxonomy" id="362948"/>
    <lineage>
        <taxon>Bacteria</taxon>
        <taxon>Bacillati</taxon>
        <taxon>Bacillota</taxon>
        <taxon>Bacilli</taxon>
        <taxon>Lactobacillales</taxon>
        <taxon>Lactobacillaceae</taxon>
        <taxon>Ligilactobacillus</taxon>
    </lineage>
</organism>
<reference key="1">
    <citation type="journal article" date="2006" name="Proc. Natl. Acad. Sci. U.S.A.">
        <title>Multireplicon genome architecture of Lactobacillus salivarius.</title>
        <authorList>
            <person name="Claesson M.J."/>
            <person name="Li Y."/>
            <person name="Leahy S."/>
            <person name="Canchaya C."/>
            <person name="van Pijkeren J.P."/>
            <person name="Cerdeno-Tarraga A.M."/>
            <person name="Parkhill J."/>
            <person name="Flynn S."/>
            <person name="O'Sullivan G.C."/>
            <person name="Collins J.K."/>
            <person name="Higgins D."/>
            <person name="Shanahan F."/>
            <person name="Fitzgerald G.F."/>
            <person name="van Sinderen D."/>
            <person name="O'Toole P.W."/>
        </authorList>
    </citation>
    <scope>NUCLEOTIDE SEQUENCE [LARGE SCALE GENOMIC DNA]</scope>
    <source>
        <strain>UCC118</strain>
    </source>
</reference>
<proteinExistence type="inferred from homology"/>
<dbReference type="EMBL" id="CP000233">
    <property type="protein sequence ID" value="ABE00034.1"/>
    <property type="molecule type" value="Genomic_DNA"/>
</dbReference>
<dbReference type="RefSeq" id="WP_003700665.1">
    <property type="nucleotide sequence ID" value="NC_007929.1"/>
</dbReference>
<dbReference type="RefSeq" id="YP_536117.1">
    <property type="nucleotide sequence ID" value="NC_007929.1"/>
</dbReference>
<dbReference type="SMR" id="Q1WSU5"/>
<dbReference type="STRING" id="362948.LSL_1226"/>
<dbReference type="KEGG" id="lsl:LSL_1226"/>
<dbReference type="PATRIC" id="fig|362948.14.peg.1300"/>
<dbReference type="HOGENOM" id="CLU_060739_1_0_9"/>
<dbReference type="OrthoDB" id="9802672at2"/>
<dbReference type="Proteomes" id="UP000006559">
    <property type="component" value="Chromosome"/>
</dbReference>
<dbReference type="GO" id="GO:0003677">
    <property type="term" value="F:DNA binding"/>
    <property type="evidence" value="ECO:0007669"/>
    <property type="project" value="UniProtKB-UniRule"/>
</dbReference>
<dbReference type="GO" id="GO:0008270">
    <property type="term" value="F:zinc ion binding"/>
    <property type="evidence" value="ECO:0007669"/>
    <property type="project" value="UniProtKB-KW"/>
</dbReference>
<dbReference type="GO" id="GO:0006310">
    <property type="term" value="P:DNA recombination"/>
    <property type="evidence" value="ECO:0007669"/>
    <property type="project" value="UniProtKB-UniRule"/>
</dbReference>
<dbReference type="GO" id="GO:0006281">
    <property type="term" value="P:DNA repair"/>
    <property type="evidence" value="ECO:0007669"/>
    <property type="project" value="UniProtKB-UniRule"/>
</dbReference>
<dbReference type="CDD" id="cd01025">
    <property type="entry name" value="TOPRIM_recR"/>
    <property type="match status" value="1"/>
</dbReference>
<dbReference type="Gene3D" id="3.30.60.80">
    <property type="match status" value="1"/>
</dbReference>
<dbReference type="Gene3D" id="3.40.1360.10">
    <property type="match status" value="1"/>
</dbReference>
<dbReference type="Gene3D" id="6.10.250.240">
    <property type="match status" value="1"/>
</dbReference>
<dbReference type="Gene3D" id="1.10.8.420">
    <property type="entry name" value="RecR Domain 1"/>
    <property type="match status" value="1"/>
</dbReference>
<dbReference type="HAMAP" id="MF_00017">
    <property type="entry name" value="RecR"/>
    <property type="match status" value="1"/>
</dbReference>
<dbReference type="InterPro" id="IPR000093">
    <property type="entry name" value="DNA_Rcmb_RecR"/>
</dbReference>
<dbReference type="InterPro" id="IPR023627">
    <property type="entry name" value="Rcmb_RecR"/>
</dbReference>
<dbReference type="InterPro" id="IPR015967">
    <property type="entry name" value="Rcmb_RecR_Znf"/>
</dbReference>
<dbReference type="InterPro" id="IPR006171">
    <property type="entry name" value="TOPRIM_dom"/>
</dbReference>
<dbReference type="InterPro" id="IPR034137">
    <property type="entry name" value="TOPRIM_RecR"/>
</dbReference>
<dbReference type="NCBIfam" id="TIGR00615">
    <property type="entry name" value="recR"/>
    <property type="match status" value="1"/>
</dbReference>
<dbReference type="PANTHER" id="PTHR30446">
    <property type="entry name" value="RECOMBINATION PROTEIN RECR"/>
    <property type="match status" value="1"/>
</dbReference>
<dbReference type="PANTHER" id="PTHR30446:SF0">
    <property type="entry name" value="RECOMBINATION PROTEIN RECR"/>
    <property type="match status" value="1"/>
</dbReference>
<dbReference type="Pfam" id="PF21175">
    <property type="entry name" value="RecR_C"/>
    <property type="match status" value="1"/>
</dbReference>
<dbReference type="Pfam" id="PF21176">
    <property type="entry name" value="RecR_HhH"/>
    <property type="match status" value="1"/>
</dbReference>
<dbReference type="Pfam" id="PF02132">
    <property type="entry name" value="RecR_ZnF"/>
    <property type="match status" value="1"/>
</dbReference>
<dbReference type="Pfam" id="PF13662">
    <property type="entry name" value="Toprim_4"/>
    <property type="match status" value="1"/>
</dbReference>
<dbReference type="SMART" id="SM00493">
    <property type="entry name" value="TOPRIM"/>
    <property type="match status" value="1"/>
</dbReference>
<dbReference type="SUPFAM" id="SSF111304">
    <property type="entry name" value="Recombination protein RecR"/>
    <property type="match status" value="1"/>
</dbReference>
<dbReference type="PROSITE" id="PS01300">
    <property type="entry name" value="RECR"/>
    <property type="match status" value="1"/>
</dbReference>
<dbReference type="PROSITE" id="PS50880">
    <property type="entry name" value="TOPRIM"/>
    <property type="match status" value="1"/>
</dbReference>
<name>RECR_LIGS1</name>
<evidence type="ECO:0000255" key="1">
    <source>
        <dbReference type="HAMAP-Rule" id="MF_00017"/>
    </source>
</evidence>
<protein>
    <recommendedName>
        <fullName evidence="1">Recombination protein RecR</fullName>
    </recommendedName>
</protein>